<keyword id="KW-0169">Cobalamin biosynthesis</keyword>
<keyword id="KW-0315">Glutamine amidotransferase</keyword>
<dbReference type="EMBL" id="CP000094">
    <property type="protein sequence ID" value="ABA73389.1"/>
    <property type="molecule type" value="Genomic_DNA"/>
</dbReference>
<dbReference type="RefSeq" id="WP_011333143.1">
    <property type="nucleotide sequence ID" value="NC_007492.2"/>
</dbReference>
<dbReference type="SMR" id="Q3KFR7"/>
<dbReference type="KEGG" id="pfo:Pfl01_1646"/>
<dbReference type="eggNOG" id="COG1492">
    <property type="taxonomic scope" value="Bacteria"/>
</dbReference>
<dbReference type="HOGENOM" id="CLU_019250_2_2_6"/>
<dbReference type="UniPathway" id="UPA00148"/>
<dbReference type="Proteomes" id="UP000002704">
    <property type="component" value="Chromosome"/>
</dbReference>
<dbReference type="GO" id="GO:0015420">
    <property type="term" value="F:ABC-type vitamin B12 transporter activity"/>
    <property type="evidence" value="ECO:0007669"/>
    <property type="project" value="UniProtKB-UniRule"/>
</dbReference>
<dbReference type="GO" id="GO:0003824">
    <property type="term" value="F:catalytic activity"/>
    <property type="evidence" value="ECO:0007669"/>
    <property type="project" value="InterPro"/>
</dbReference>
<dbReference type="GO" id="GO:0009236">
    <property type="term" value="P:cobalamin biosynthetic process"/>
    <property type="evidence" value="ECO:0007669"/>
    <property type="project" value="UniProtKB-UniRule"/>
</dbReference>
<dbReference type="CDD" id="cd05389">
    <property type="entry name" value="CobQ_N"/>
    <property type="match status" value="1"/>
</dbReference>
<dbReference type="CDD" id="cd01750">
    <property type="entry name" value="GATase1_CobQ"/>
    <property type="match status" value="1"/>
</dbReference>
<dbReference type="Gene3D" id="3.40.50.880">
    <property type="match status" value="1"/>
</dbReference>
<dbReference type="Gene3D" id="3.40.50.300">
    <property type="entry name" value="P-loop containing nucleotide triphosphate hydrolases"/>
    <property type="match status" value="1"/>
</dbReference>
<dbReference type="HAMAP" id="MF_00028">
    <property type="entry name" value="CobQ"/>
    <property type="match status" value="1"/>
</dbReference>
<dbReference type="InterPro" id="IPR029062">
    <property type="entry name" value="Class_I_gatase-like"/>
</dbReference>
<dbReference type="InterPro" id="IPR002586">
    <property type="entry name" value="CobQ/CobB/MinD/ParA_Nub-bd_dom"/>
</dbReference>
<dbReference type="InterPro" id="IPR033949">
    <property type="entry name" value="CobQ_GATase1"/>
</dbReference>
<dbReference type="InterPro" id="IPR047045">
    <property type="entry name" value="CobQ_N"/>
</dbReference>
<dbReference type="InterPro" id="IPR004459">
    <property type="entry name" value="CobQ_synth"/>
</dbReference>
<dbReference type="InterPro" id="IPR011698">
    <property type="entry name" value="GATase_3"/>
</dbReference>
<dbReference type="InterPro" id="IPR027417">
    <property type="entry name" value="P-loop_NTPase"/>
</dbReference>
<dbReference type="NCBIfam" id="TIGR00313">
    <property type="entry name" value="cobQ"/>
    <property type="match status" value="1"/>
</dbReference>
<dbReference type="NCBIfam" id="NF001989">
    <property type="entry name" value="PRK00784.1"/>
    <property type="match status" value="1"/>
</dbReference>
<dbReference type="PANTHER" id="PTHR21343:SF1">
    <property type="entry name" value="COBYRIC ACID SYNTHASE"/>
    <property type="match status" value="1"/>
</dbReference>
<dbReference type="PANTHER" id="PTHR21343">
    <property type="entry name" value="DETHIOBIOTIN SYNTHETASE"/>
    <property type="match status" value="1"/>
</dbReference>
<dbReference type="Pfam" id="PF01656">
    <property type="entry name" value="CbiA"/>
    <property type="match status" value="1"/>
</dbReference>
<dbReference type="Pfam" id="PF07685">
    <property type="entry name" value="GATase_3"/>
    <property type="match status" value="1"/>
</dbReference>
<dbReference type="SUPFAM" id="SSF52317">
    <property type="entry name" value="Class I glutamine amidotransferase-like"/>
    <property type="match status" value="1"/>
</dbReference>
<dbReference type="SUPFAM" id="SSF52540">
    <property type="entry name" value="P-loop containing nucleoside triphosphate hydrolases"/>
    <property type="match status" value="1"/>
</dbReference>
<dbReference type="PROSITE" id="PS51274">
    <property type="entry name" value="GATASE_COBBQ"/>
    <property type="match status" value="1"/>
</dbReference>
<sequence length="488" mass="52243">MTTLMVQGTTSDAGKSTLVTALCRWATRQGVAVVPFKPQNMALNSAVTADGGEIGRAQAVQAQAAFLEPHTDMNPVLLKPNSDTGAQVIIHGRAVTSMNAVAYHDYKAIAMQAVLASHERLSAAYPLVMVEGAGSPAEINLRAGDIANMGFAEAVDCPVLLIADINRGGVFAHLVGTLELLSPSEQARIKGFIINRFRGDIALLQPGLDWLEQRTGKPVVGVLPYVMDLHLEAEDGIDQRQTDKAEQVLKVVVPVLPRISNHTDFDPLRLHPQVDLQFIGPGQAIPPADLIILPGSKSVRSDLAYLRANGWESAIRRHLRYGGKLLGICGGLQMLGEQVHDPLGLEGAPGSSAGLGLLAFETQLEAEKQLRNVRGRLALEDAEVSGYEIHAGVTTGAALEKAAVHLDDGRCDGAQSLDGQIFGTYLHGLFESPAASAALLRWAGLYDVQEVDYHGLRERDIERLADLVEKHLDTGLLRELCGISPCSS</sequence>
<comment type="function">
    <text evidence="1">Catalyzes amidations at positions B, D, E, and G on adenosylcobyrinic A,C-diamide. NH(2) groups are provided by glutamine, and one molecule of ATP is hydrogenolyzed for each amidation.</text>
</comment>
<comment type="pathway">
    <text evidence="1">Cofactor biosynthesis; adenosylcobalamin biosynthesis.</text>
</comment>
<comment type="similarity">
    <text evidence="1">Belongs to the CobB/CobQ family. CobQ subfamily.</text>
</comment>
<feature type="chain" id="PRO_0000332371" description="Cobyric acid synthase">
    <location>
        <begin position="1"/>
        <end position="488"/>
    </location>
</feature>
<feature type="domain" description="GATase cobBQ-type" evidence="1">
    <location>
        <begin position="248"/>
        <end position="435"/>
    </location>
</feature>
<feature type="active site" description="Nucleophile" evidence="1">
    <location>
        <position position="329"/>
    </location>
</feature>
<feature type="active site" evidence="1">
    <location>
        <position position="427"/>
    </location>
</feature>
<name>COBQ_PSEPF</name>
<proteinExistence type="inferred from homology"/>
<accession>Q3KFR7</accession>
<gene>
    <name evidence="1" type="primary">cobQ</name>
    <name type="ordered locus">Pfl01_1646</name>
</gene>
<evidence type="ECO:0000255" key="1">
    <source>
        <dbReference type="HAMAP-Rule" id="MF_00028"/>
    </source>
</evidence>
<reference key="1">
    <citation type="journal article" date="2009" name="Genome Biol.">
        <title>Genomic and genetic analyses of diversity and plant interactions of Pseudomonas fluorescens.</title>
        <authorList>
            <person name="Silby M.W."/>
            <person name="Cerdeno-Tarraga A.M."/>
            <person name="Vernikos G.S."/>
            <person name="Giddens S.R."/>
            <person name="Jackson R.W."/>
            <person name="Preston G.M."/>
            <person name="Zhang X.-X."/>
            <person name="Moon C.D."/>
            <person name="Gehrig S.M."/>
            <person name="Godfrey S.A.C."/>
            <person name="Knight C.G."/>
            <person name="Malone J.G."/>
            <person name="Robinson Z."/>
            <person name="Spiers A.J."/>
            <person name="Harris S."/>
            <person name="Challis G.L."/>
            <person name="Yaxley A.M."/>
            <person name="Harris D."/>
            <person name="Seeger K."/>
            <person name="Murphy L."/>
            <person name="Rutter S."/>
            <person name="Squares R."/>
            <person name="Quail M.A."/>
            <person name="Saunders E."/>
            <person name="Mavromatis K."/>
            <person name="Brettin T.S."/>
            <person name="Bentley S.D."/>
            <person name="Hothersall J."/>
            <person name="Stephens E."/>
            <person name="Thomas C.M."/>
            <person name="Parkhill J."/>
            <person name="Levy S.B."/>
            <person name="Rainey P.B."/>
            <person name="Thomson N.R."/>
        </authorList>
    </citation>
    <scope>NUCLEOTIDE SEQUENCE [LARGE SCALE GENOMIC DNA]</scope>
    <source>
        <strain>Pf0-1</strain>
    </source>
</reference>
<organism>
    <name type="scientific">Pseudomonas fluorescens (strain Pf0-1)</name>
    <dbReference type="NCBI Taxonomy" id="205922"/>
    <lineage>
        <taxon>Bacteria</taxon>
        <taxon>Pseudomonadati</taxon>
        <taxon>Pseudomonadota</taxon>
        <taxon>Gammaproteobacteria</taxon>
        <taxon>Pseudomonadales</taxon>
        <taxon>Pseudomonadaceae</taxon>
        <taxon>Pseudomonas</taxon>
    </lineage>
</organism>
<protein>
    <recommendedName>
        <fullName evidence="1">Cobyric acid synthase</fullName>
    </recommendedName>
</protein>